<organism>
    <name type="scientific">Rickettsia conorii (strain ATCC VR-613 / Malish 7)</name>
    <dbReference type="NCBI Taxonomy" id="272944"/>
    <lineage>
        <taxon>Bacteria</taxon>
        <taxon>Pseudomonadati</taxon>
        <taxon>Pseudomonadota</taxon>
        <taxon>Alphaproteobacteria</taxon>
        <taxon>Rickettsiales</taxon>
        <taxon>Rickettsiaceae</taxon>
        <taxon>Rickettsieae</taxon>
        <taxon>Rickettsia</taxon>
        <taxon>spotted fever group</taxon>
    </lineage>
</organism>
<reference key="1">
    <citation type="journal article" date="2001" name="Science">
        <title>Mechanisms of evolution in Rickettsia conorii and R. prowazekii.</title>
        <authorList>
            <person name="Ogata H."/>
            <person name="Audic S."/>
            <person name="Renesto-Audiffren P."/>
            <person name="Fournier P.-E."/>
            <person name="Barbe V."/>
            <person name="Samson D."/>
            <person name="Roux V."/>
            <person name="Cossart P."/>
            <person name="Weissenbach J."/>
            <person name="Claverie J.-M."/>
            <person name="Raoult D."/>
        </authorList>
    </citation>
    <scope>NUCLEOTIDE SEQUENCE [LARGE SCALE GENOMIC DNA]</scope>
    <source>
        <strain>ATCC VR-613 / Malish 7</strain>
    </source>
</reference>
<keyword id="KW-0067">ATP-binding</keyword>
<keyword id="KW-0131">Cell cycle</keyword>
<keyword id="KW-0132">Cell division</keyword>
<keyword id="KW-0133">Cell shape</keyword>
<keyword id="KW-0961">Cell wall biogenesis/degradation</keyword>
<keyword id="KW-0963">Cytoplasm</keyword>
<keyword id="KW-0436">Ligase</keyword>
<keyword id="KW-0547">Nucleotide-binding</keyword>
<keyword id="KW-0573">Peptidoglycan synthesis</keyword>
<protein>
    <recommendedName>
        <fullName>UDP-N-acetylmuramoylalanine--D-glutamate ligase</fullName>
        <ecNumber>6.3.2.9</ecNumber>
    </recommendedName>
    <alternativeName>
        <fullName>D-glutamic acid-adding enzyme</fullName>
    </alternativeName>
    <alternativeName>
        <fullName>UDP-N-acetylmuramoyl-L-alanyl-D-glutamate synthetase</fullName>
    </alternativeName>
</protein>
<feature type="chain" id="PRO_0000109071" description="UDP-N-acetylmuramoylalanine--D-glutamate ligase">
    <location>
        <begin position="1"/>
        <end position="500"/>
    </location>
</feature>
<feature type="domain" description="RPE3 insert">
    <location>
        <begin position="260"/>
        <end position="306"/>
    </location>
</feature>
<feature type="binding site" evidence="2">
    <location>
        <begin position="111"/>
        <end position="117"/>
    </location>
    <ligand>
        <name>ATP</name>
        <dbReference type="ChEBI" id="CHEBI:30616"/>
    </ligand>
</feature>
<proteinExistence type="inferred from homology"/>
<evidence type="ECO:0000250" key="1"/>
<evidence type="ECO:0000255" key="2"/>
<evidence type="ECO:0000305" key="3"/>
<name>MURD_RICCN</name>
<accession>Q92I60</accession>
<sequence>MNSHTKQKIGVFGLGKTGISVYEELQNKYDVIVYDDLKANRDIFEELYSKTAIAALSDSRWQNLDTIVLSPGIPLTHEIVNIAKSFNIPITSDIDLLFAKSKNLKFIAITGTNGKSTTTALISHILNSSGLDYPVAGNIGVSALQAKASKDGYVLELSSFQLDLVKTFTAKIAVLLNITPDHLDRHQDMTCYIAAKSKIFDRMDQESYAVINIDNDYCREVFIKLQQEQRIKLIPFSVAQILENGISVVDDKISANFCDDISFELQHNSESFRQDEFQGEPAEPECIKIREHRQDLQNSLVSSFMHYAVPFNKNLQGVHNCENIAASYAVAKIIGVEPKKILESISSFQSLPHRMQYIGSINNISFYNDSKATNAISAVQSIKALDNIYWLAGGIPKEGGIEEIKPYFSHIKKAYFYGQAKEIFANTAKNIVDFVICDNLEQAFDLAYKDAVGDNAEIKNILLAPSCSSYDQFKNFEERGELFIKLCSILSLRGLITGSS</sequence>
<dbReference type="EC" id="6.3.2.9"/>
<dbReference type="EMBL" id="AE006914">
    <property type="protein sequence ID" value="AAL03098.1"/>
    <property type="molecule type" value="Genomic_DNA"/>
</dbReference>
<dbReference type="PIR" id="H97769">
    <property type="entry name" value="H97769"/>
</dbReference>
<dbReference type="RefSeq" id="WP_010977195.1">
    <property type="nucleotide sequence ID" value="NC_003103.1"/>
</dbReference>
<dbReference type="SMR" id="Q92I60"/>
<dbReference type="GeneID" id="927672"/>
<dbReference type="KEGG" id="rco:RC0560"/>
<dbReference type="PATRIC" id="fig|272944.4.peg.639"/>
<dbReference type="HOGENOM" id="CLU_032540_3_0_5"/>
<dbReference type="UniPathway" id="UPA00219"/>
<dbReference type="Proteomes" id="UP000000816">
    <property type="component" value="Chromosome"/>
</dbReference>
<dbReference type="GO" id="GO:0005737">
    <property type="term" value="C:cytoplasm"/>
    <property type="evidence" value="ECO:0007669"/>
    <property type="project" value="UniProtKB-SubCell"/>
</dbReference>
<dbReference type="GO" id="GO:0005524">
    <property type="term" value="F:ATP binding"/>
    <property type="evidence" value="ECO:0007669"/>
    <property type="project" value="UniProtKB-UniRule"/>
</dbReference>
<dbReference type="GO" id="GO:0004326">
    <property type="term" value="F:tetrahydrofolylpolyglutamate synthase activity"/>
    <property type="evidence" value="ECO:0007669"/>
    <property type="project" value="InterPro"/>
</dbReference>
<dbReference type="GO" id="GO:0008764">
    <property type="term" value="F:UDP-N-acetylmuramoylalanine-D-glutamate ligase activity"/>
    <property type="evidence" value="ECO:0007669"/>
    <property type="project" value="UniProtKB-UniRule"/>
</dbReference>
<dbReference type="GO" id="GO:0051301">
    <property type="term" value="P:cell division"/>
    <property type="evidence" value="ECO:0007669"/>
    <property type="project" value="UniProtKB-KW"/>
</dbReference>
<dbReference type="GO" id="GO:0071555">
    <property type="term" value="P:cell wall organization"/>
    <property type="evidence" value="ECO:0007669"/>
    <property type="project" value="UniProtKB-KW"/>
</dbReference>
<dbReference type="GO" id="GO:0009252">
    <property type="term" value="P:peptidoglycan biosynthetic process"/>
    <property type="evidence" value="ECO:0007669"/>
    <property type="project" value="UniProtKB-UniRule"/>
</dbReference>
<dbReference type="GO" id="GO:0008360">
    <property type="term" value="P:regulation of cell shape"/>
    <property type="evidence" value="ECO:0007669"/>
    <property type="project" value="UniProtKB-KW"/>
</dbReference>
<dbReference type="Gene3D" id="3.90.190.20">
    <property type="entry name" value="Mur ligase, C-terminal domain"/>
    <property type="match status" value="1"/>
</dbReference>
<dbReference type="Gene3D" id="3.40.1190.10">
    <property type="entry name" value="Mur-like, catalytic domain"/>
    <property type="match status" value="1"/>
</dbReference>
<dbReference type="Gene3D" id="3.40.50.720">
    <property type="entry name" value="NAD(P)-binding Rossmann-like Domain"/>
    <property type="match status" value="1"/>
</dbReference>
<dbReference type="HAMAP" id="MF_00639">
    <property type="entry name" value="MurD"/>
    <property type="match status" value="1"/>
</dbReference>
<dbReference type="InterPro" id="IPR018109">
    <property type="entry name" value="Folylpolyglutamate_synth_CS"/>
</dbReference>
<dbReference type="InterPro" id="IPR036565">
    <property type="entry name" value="Mur-like_cat_sf"/>
</dbReference>
<dbReference type="InterPro" id="IPR004101">
    <property type="entry name" value="Mur_ligase_C"/>
</dbReference>
<dbReference type="InterPro" id="IPR036615">
    <property type="entry name" value="Mur_ligase_C_dom_sf"/>
</dbReference>
<dbReference type="InterPro" id="IPR013221">
    <property type="entry name" value="Mur_ligase_cen"/>
</dbReference>
<dbReference type="InterPro" id="IPR005762">
    <property type="entry name" value="MurD"/>
</dbReference>
<dbReference type="InterPro" id="IPR022437">
    <property type="entry name" value="RPE3"/>
</dbReference>
<dbReference type="NCBIfam" id="TIGR01087">
    <property type="entry name" value="murD"/>
    <property type="match status" value="1"/>
</dbReference>
<dbReference type="NCBIfam" id="TIGR03775">
    <property type="entry name" value="RPE3"/>
    <property type="match status" value="1"/>
</dbReference>
<dbReference type="PANTHER" id="PTHR43692">
    <property type="entry name" value="UDP-N-ACETYLMURAMOYLALANINE--D-GLUTAMATE LIGASE"/>
    <property type="match status" value="1"/>
</dbReference>
<dbReference type="PANTHER" id="PTHR43692:SF1">
    <property type="entry name" value="UDP-N-ACETYLMURAMOYLALANINE--D-GLUTAMATE LIGASE"/>
    <property type="match status" value="1"/>
</dbReference>
<dbReference type="Pfam" id="PF02875">
    <property type="entry name" value="Mur_ligase_C"/>
    <property type="match status" value="1"/>
</dbReference>
<dbReference type="Pfam" id="PF08245">
    <property type="entry name" value="Mur_ligase_M"/>
    <property type="match status" value="1"/>
</dbReference>
<dbReference type="Pfam" id="PF21799">
    <property type="entry name" value="MurD-like_N"/>
    <property type="match status" value="1"/>
</dbReference>
<dbReference type="SUPFAM" id="SSF51984">
    <property type="entry name" value="MurCD N-terminal domain"/>
    <property type="match status" value="1"/>
</dbReference>
<dbReference type="SUPFAM" id="SSF53623">
    <property type="entry name" value="MurD-like peptide ligases, catalytic domain"/>
    <property type="match status" value="1"/>
</dbReference>
<dbReference type="SUPFAM" id="SSF53244">
    <property type="entry name" value="MurD-like peptide ligases, peptide-binding domain"/>
    <property type="match status" value="1"/>
</dbReference>
<comment type="function">
    <text evidence="1">Cell wall formation. Catalyzes the addition of glutamate to the nucleotide precursor UDP-N-acetylmuramoyl-L-alanine (UMA).</text>
</comment>
<comment type="catalytic activity">
    <reaction>
        <text>UDP-N-acetyl-alpha-D-muramoyl-L-alanine + D-glutamate + ATP = UDP-N-acetyl-alpha-D-muramoyl-L-alanyl-D-glutamate + ADP + phosphate + H(+)</text>
        <dbReference type="Rhea" id="RHEA:16429"/>
        <dbReference type="ChEBI" id="CHEBI:15378"/>
        <dbReference type="ChEBI" id="CHEBI:29986"/>
        <dbReference type="ChEBI" id="CHEBI:30616"/>
        <dbReference type="ChEBI" id="CHEBI:43474"/>
        <dbReference type="ChEBI" id="CHEBI:83898"/>
        <dbReference type="ChEBI" id="CHEBI:83900"/>
        <dbReference type="ChEBI" id="CHEBI:456216"/>
        <dbReference type="EC" id="6.3.2.9"/>
    </reaction>
</comment>
<comment type="pathway">
    <text>Cell wall biogenesis; peptidoglycan biosynthesis.</text>
</comment>
<comment type="subcellular location">
    <subcellularLocation>
        <location evidence="1">Cytoplasm</location>
    </subcellularLocation>
</comment>
<comment type="similarity">
    <text evidence="3">Belongs to the MurCDEF family.</text>
</comment>
<gene>
    <name type="primary">murD</name>
    <name type="ordered locus">RC0560</name>
</gene>